<feature type="chain" id="PRO_0000305927" description="H(+)/Cl(-) exchange transporter 5">
    <location>
        <begin position="1"/>
        <end position="746"/>
    </location>
</feature>
<feature type="topological domain" description="Cytoplasmic" evidence="1">
    <location>
        <begin position="1"/>
        <end position="54"/>
    </location>
</feature>
<feature type="transmembrane region" description="Helical" evidence="1">
    <location>
        <begin position="55"/>
        <end position="92"/>
    </location>
</feature>
<feature type="transmembrane region" description="Helical" evidence="1">
    <location>
        <begin position="138"/>
        <end position="161"/>
    </location>
</feature>
<feature type="intramembrane region" description="Helical" evidence="1">
    <location>
        <begin position="170"/>
        <end position="177"/>
    </location>
</feature>
<feature type="transmembrane region" description="Helical" evidence="1">
    <location>
        <begin position="186"/>
        <end position="205"/>
    </location>
</feature>
<feature type="transmembrane region" description="Helical" evidence="1">
    <location>
        <begin position="211"/>
        <end position="230"/>
    </location>
</feature>
<feature type="intramembrane region" description="Helical" evidence="1">
    <location>
        <begin position="242"/>
        <end position="254"/>
    </location>
</feature>
<feature type="intramembrane region" description="Helical" evidence="1">
    <location>
        <begin position="258"/>
        <end position="266"/>
    </location>
</feature>
<feature type="transmembrane region" description="Helical" evidence="1">
    <location>
        <begin position="278"/>
        <end position="296"/>
    </location>
</feature>
<feature type="transmembrane region" description="Helical" evidence="1">
    <location>
        <begin position="319"/>
        <end position="344"/>
    </location>
</feature>
<feature type="transmembrane region" description="Helical" evidence="1">
    <location>
        <begin position="352"/>
        <end position="372"/>
    </location>
</feature>
<feature type="transmembrane region" description="Helical" evidence="1">
    <location>
        <begin position="428"/>
        <end position="448"/>
    </location>
</feature>
<feature type="transmembrane region" description="Helical" evidence="1">
    <location>
        <begin position="453"/>
        <end position="472"/>
    </location>
</feature>
<feature type="intramembrane region" description="Helical" evidence="1">
    <location>
        <begin position="500"/>
        <end position="514"/>
    </location>
</feature>
<feature type="intramembrane region" description="Note=Loop between two helices" evidence="1">
    <location>
        <begin position="515"/>
        <end position="517"/>
    </location>
</feature>
<feature type="intramembrane region" description="Helical" evidence="1">
    <location>
        <begin position="518"/>
        <end position="529"/>
    </location>
</feature>
<feature type="intramembrane region" description="Note=Loop between two helices" evidence="1">
    <location>
        <begin position="530"/>
        <end position="534"/>
    </location>
</feature>
<feature type="transmembrane region" description="Helical" evidence="1">
    <location>
        <begin position="535"/>
        <end position="552"/>
    </location>
</feature>
<feature type="topological domain" description="Cytoplasmic" evidence="1">
    <location>
        <begin position="553"/>
        <end position="746"/>
    </location>
</feature>
<feature type="domain" description="CBS 1" evidence="3">
    <location>
        <begin position="586"/>
        <end position="650"/>
    </location>
</feature>
<feature type="domain" description="CBS 2" evidence="3">
    <location>
        <begin position="682"/>
        <end position="742"/>
    </location>
</feature>
<feature type="short sequence motif" description="Selectivity filter part_1" evidence="1">
    <location>
        <begin position="167"/>
        <end position="171"/>
    </location>
</feature>
<feature type="short sequence motif" description="Selectivity filter part_2" evidence="1">
    <location>
        <begin position="209"/>
        <end position="213"/>
    </location>
</feature>
<feature type="short sequence motif" description="Selectivity filter part_3" evidence="1">
    <location>
        <begin position="453"/>
        <end position="457"/>
    </location>
</feature>
<feature type="binding site" evidence="1">
    <location>
        <position position="168"/>
    </location>
    <ligand>
        <name>chloride</name>
        <dbReference type="ChEBI" id="CHEBI:17996"/>
    </ligand>
</feature>
<feature type="binding site" evidence="1">
    <location>
        <position position="455"/>
    </location>
    <ligand>
        <name>chloride</name>
        <dbReference type="ChEBI" id="CHEBI:17996"/>
    </ligand>
</feature>
<feature type="binding site" evidence="1">
    <location>
        <position position="558"/>
    </location>
    <ligand>
        <name>chloride</name>
        <dbReference type="ChEBI" id="CHEBI:17996"/>
    </ligand>
</feature>
<feature type="binding site" evidence="2">
    <location>
        <position position="596"/>
    </location>
    <ligand>
        <name>ATP</name>
        <dbReference type="ChEBI" id="CHEBI:30616"/>
    </ligand>
</feature>
<feature type="binding site" evidence="2">
    <location>
        <begin position="617"/>
        <end position="619"/>
    </location>
    <ligand>
        <name>ATP</name>
        <dbReference type="ChEBI" id="CHEBI:30616"/>
    </ligand>
</feature>
<feature type="binding site" evidence="2">
    <location>
        <begin position="724"/>
        <end position="727"/>
    </location>
    <ligand>
        <name>ATP</name>
        <dbReference type="ChEBI" id="CHEBI:30616"/>
    </ligand>
</feature>
<feature type="site" description="Mediates proton transfer from the outer aqueous phase to the interior of the protein; involved in linking H(+) and Cl(-) transport" evidence="1">
    <location>
        <position position="211"/>
    </location>
</feature>
<feature type="site" description="Mediates proton transfer from the protein to the inner aqueous phase" evidence="1">
    <location>
        <position position="268"/>
    </location>
</feature>
<evidence type="ECO:0000250" key="1"/>
<evidence type="ECO:0000250" key="2">
    <source>
        <dbReference type="UniProtKB" id="P51795"/>
    </source>
</evidence>
<evidence type="ECO:0000255" key="3">
    <source>
        <dbReference type="PROSITE-ProRule" id="PRU00703"/>
    </source>
</evidence>
<evidence type="ECO:0000269" key="4">
    <source>
    </source>
</evidence>
<evidence type="ECO:0000305" key="5"/>
<sequence>MDFLEEPIPGVGTYDDFNTIDWVREKSRDRDRHREITNRSKESTWALIHSVSDAFSGWLLMLLIGLLSGSLAGLIDISAHWMTDLKEGICTEGFWFNHEHCCWNSQQVTFEDRDKCPEWNSWSQLIINMDEGAFAYIVNYFMYVLWALLFAFLAVSLVKVFAPYACGSGIPEIKTILSGFIIRGYLGKWTLIIKTITLVLAVSSGLSLGKEGPLVHVACCCGNILCHCFNKYRENEAKRREVLSAAAAAGVSVAFGAPIGGVLFSLEEVSYYFPLKTLWRSFFAALVAAFTLRSINPFGNSRLVLFYVEFHTPWHLFELVPFILLGIFGGLWGALFIRTNIAWCRKRKTTQLGKYPVIEVLIVTAITAILAFPNEYTRMSTSELISELFNDCGLLDSSKLCDYKNLSNTSKSGELPDRPAGAGVSSAMWQLALTLILKIVITIFTFGMKIPSGLFIPSMAVGAIAGRLLGVGMEQLAYHHRDWTIFNSWCSQGADCITPGLYAMVGAAACLGGVTRMTVSLVVIMFELTGGLEYIVPLMAAAMTSKWVADALGREGIYDAHIRLNGYPFLEAKEEFAHKTLAMDVMKPRRNDPLLTVLTQDSMTVEDVETIISETTYSGFPVVVSRESQRLVGFVLRRDLIISIENARKEQDGVVSTSIIYFTEHSPPVPPYTAPTLKLRNILDLSPFTVTDLTPMEIVVDIFRKLGLRQCLVTHNGRLLGIITKKDVLKHIAQMANQDPDSILFN</sequence>
<proteinExistence type="evidence at transcript level"/>
<accession>Q99P66</accession>
<organism>
    <name type="scientific">Cavia porcellus</name>
    <name type="common">Guinea pig</name>
    <dbReference type="NCBI Taxonomy" id="10141"/>
    <lineage>
        <taxon>Eukaryota</taxon>
        <taxon>Metazoa</taxon>
        <taxon>Chordata</taxon>
        <taxon>Craniata</taxon>
        <taxon>Vertebrata</taxon>
        <taxon>Euteleostomi</taxon>
        <taxon>Mammalia</taxon>
        <taxon>Eutheria</taxon>
        <taxon>Euarchontoglires</taxon>
        <taxon>Glires</taxon>
        <taxon>Rodentia</taxon>
        <taxon>Hystricomorpha</taxon>
        <taxon>Caviidae</taxon>
        <taxon>Cavia</taxon>
    </lineage>
</organism>
<dbReference type="EMBL" id="AF326968">
    <property type="protein sequence ID" value="AAG49590.1"/>
    <property type="molecule type" value="mRNA"/>
</dbReference>
<dbReference type="RefSeq" id="NP_001166402.1">
    <property type="nucleotide sequence ID" value="NM_001172931.1"/>
</dbReference>
<dbReference type="SMR" id="Q99P66"/>
<dbReference type="STRING" id="10141.ENSCPOP00000008907"/>
<dbReference type="GeneID" id="100135502"/>
<dbReference type="KEGG" id="cpoc:100135502"/>
<dbReference type="CTD" id="1184"/>
<dbReference type="eggNOG" id="KOG0475">
    <property type="taxonomic scope" value="Eukaryota"/>
</dbReference>
<dbReference type="InParanoid" id="Q99P66"/>
<dbReference type="OrthoDB" id="44789at2759"/>
<dbReference type="Proteomes" id="UP000005447">
    <property type="component" value="Unassembled WGS sequence"/>
</dbReference>
<dbReference type="GO" id="GO:0005769">
    <property type="term" value="C:early endosome"/>
    <property type="evidence" value="ECO:0007669"/>
    <property type="project" value="TreeGrafter"/>
</dbReference>
<dbReference type="GO" id="GO:0010008">
    <property type="term" value="C:endosome membrane"/>
    <property type="evidence" value="ECO:0007669"/>
    <property type="project" value="UniProtKB-SubCell"/>
</dbReference>
<dbReference type="GO" id="GO:0000139">
    <property type="term" value="C:Golgi membrane"/>
    <property type="evidence" value="ECO:0007669"/>
    <property type="project" value="UniProtKB-SubCell"/>
</dbReference>
<dbReference type="GO" id="GO:0005886">
    <property type="term" value="C:plasma membrane"/>
    <property type="evidence" value="ECO:0007669"/>
    <property type="project" value="UniProtKB-SubCell"/>
</dbReference>
<dbReference type="GO" id="GO:0008021">
    <property type="term" value="C:synaptic vesicle"/>
    <property type="evidence" value="ECO:0007669"/>
    <property type="project" value="TreeGrafter"/>
</dbReference>
<dbReference type="GO" id="GO:0015297">
    <property type="term" value="F:antiporter activity"/>
    <property type="evidence" value="ECO:0007669"/>
    <property type="project" value="UniProtKB-KW"/>
</dbReference>
<dbReference type="GO" id="GO:0005524">
    <property type="term" value="F:ATP binding"/>
    <property type="evidence" value="ECO:0007669"/>
    <property type="project" value="UniProtKB-KW"/>
</dbReference>
<dbReference type="GO" id="GO:0005247">
    <property type="term" value="F:voltage-gated chloride channel activity"/>
    <property type="evidence" value="ECO:0007669"/>
    <property type="project" value="InterPro"/>
</dbReference>
<dbReference type="CDD" id="cd04591">
    <property type="entry name" value="CBS_pair_voltage-gated_CLC_euk_bac"/>
    <property type="match status" value="1"/>
</dbReference>
<dbReference type="CDD" id="cd03684">
    <property type="entry name" value="ClC_3_like"/>
    <property type="match status" value="1"/>
</dbReference>
<dbReference type="FunFam" id="3.10.580.20:FF:000001">
    <property type="entry name" value="Chloride channel protein"/>
    <property type="match status" value="1"/>
</dbReference>
<dbReference type="FunFam" id="3.90.1280.20:FF:000001">
    <property type="entry name" value="Chloride channel protein"/>
    <property type="match status" value="1"/>
</dbReference>
<dbReference type="FunFam" id="3.90.1280.20:FF:000003">
    <property type="entry name" value="Chloride channel protein"/>
    <property type="match status" value="1"/>
</dbReference>
<dbReference type="Gene3D" id="3.10.580.20">
    <property type="match status" value="1"/>
</dbReference>
<dbReference type="Gene3D" id="3.90.1280.20">
    <property type="match status" value="1"/>
</dbReference>
<dbReference type="Gene3D" id="1.10.3080.10">
    <property type="entry name" value="Clc chloride channel"/>
    <property type="match status" value="1"/>
</dbReference>
<dbReference type="InterPro" id="IPR000644">
    <property type="entry name" value="CBS_dom"/>
</dbReference>
<dbReference type="InterPro" id="IPR046342">
    <property type="entry name" value="CBS_dom_sf"/>
</dbReference>
<dbReference type="InterPro" id="IPR014743">
    <property type="entry name" value="Cl-channel_core"/>
</dbReference>
<dbReference type="InterPro" id="IPR002247">
    <property type="entry name" value="Cl_channel-5"/>
</dbReference>
<dbReference type="InterPro" id="IPR001807">
    <property type="entry name" value="ClC"/>
</dbReference>
<dbReference type="PANTHER" id="PTHR45711">
    <property type="entry name" value="CHLORIDE CHANNEL PROTEIN"/>
    <property type="match status" value="1"/>
</dbReference>
<dbReference type="PANTHER" id="PTHR45711:SF7">
    <property type="entry name" value="H(+)_CL(-) EXCHANGE TRANSPORTER 5"/>
    <property type="match status" value="1"/>
</dbReference>
<dbReference type="Pfam" id="PF00571">
    <property type="entry name" value="CBS"/>
    <property type="match status" value="2"/>
</dbReference>
<dbReference type="Pfam" id="PF00654">
    <property type="entry name" value="Voltage_CLC"/>
    <property type="match status" value="1"/>
</dbReference>
<dbReference type="PRINTS" id="PR00762">
    <property type="entry name" value="CLCHANNEL"/>
</dbReference>
<dbReference type="PRINTS" id="PR01116">
    <property type="entry name" value="CLCHANNEL5"/>
</dbReference>
<dbReference type="SMART" id="SM00116">
    <property type="entry name" value="CBS"/>
    <property type="match status" value="2"/>
</dbReference>
<dbReference type="SUPFAM" id="SSF54631">
    <property type="entry name" value="CBS-domain pair"/>
    <property type="match status" value="1"/>
</dbReference>
<dbReference type="SUPFAM" id="SSF81340">
    <property type="entry name" value="Clc chloride channel"/>
    <property type="match status" value="1"/>
</dbReference>
<dbReference type="PROSITE" id="PS51371">
    <property type="entry name" value="CBS"/>
    <property type="match status" value="2"/>
</dbReference>
<protein>
    <recommendedName>
        <fullName>H(+)/Cl(-) exchange transporter 5</fullName>
    </recommendedName>
    <alternativeName>
        <fullName>Chloride channel protein 5</fullName>
        <shortName>ClC-5</shortName>
    </alternativeName>
    <alternativeName>
        <fullName>Chloride transporter ClC-5</fullName>
    </alternativeName>
</protein>
<reference key="1">
    <citation type="journal article" date="2001" name="Biochim. Biophys. Acta">
        <title>Cloning, cellular distribution and functional expression of small intestinal epithelium guinea pig ClC-5 chloride channel.</title>
        <authorList>
            <person name="Cornejo I."/>
            <person name="Niemeyer M.I."/>
            <person name="Sepulveda F.V."/>
            <person name="Cid L.P."/>
        </authorList>
    </citation>
    <scope>NUCLEOTIDE SEQUENCE [MRNA]</scope>
    <scope>FUNCTION</scope>
    <scope>TISSUE SPECIFICITY</scope>
</reference>
<gene>
    <name type="primary">CLCN5</name>
</gene>
<comment type="function">
    <text evidence="2 4 5">Proton-coupled chloride transporter. Functions as antiport system and exchanges chloride ions against protons (PubMed:11406114). Important for normal acidification of the endosome lumen. May play an important role in renal tubular function (By similarity). The CLC channel family contains both chloride channels and proton-coupled anion transporters that exchange chloride or another anion for protons. The absence of conserved gating glutamate residues is typical for family members that function as channels (Probable).</text>
</comment>
<comment type="catalytic activity">
    <reaction evidence="2">
        <text>2 chloride(in) + H(+)(out) = 2 chloride(out) + H(+)(in)</text>
        <dbReference type="Rhea" id="RHEA:29567"/>
        <dbReference type="ChEBI" id="CHEBI:15378"/>
        <dbReference type="ChEBI" id="CHEBI:17996"/>
    </reaction>
</comment>
<comment type="subunit">
    <text evidence="2">Interacts with NEDD4 and NEDD4L.</text>
</comment>
<comment type="subcellular location">
    <subcellularLocation>
        <location evidence="2">Golgi apparatus membrane</location>
        <topology evidence="2">Multi-pass membrane protein</topology>
    </subcellularLocation>
    <subcellularLocation>
        <location evidence="2">Endosome membrane</location>
        <topology evidence="2">Multi-pass membrane protein</topology>
    </subcellularLocation>
    <subcellularLocation>
        <location evidence="2">Cell membrane</location>
        <topology evidence="2">Multi-pass membrane protein</topology>
    </subcellularLocation>
</comment>
<comment type="tissue specificity">
    <text evidence="4">Detected in duodenum, jejunum and ileum. Detected in crypt and villus regions of the epithelium of the small intestine.</text>
</comment>
<comment type="PTM">
    <text evidence="2">Ubiquitinated by NEDD4L in the presence of albumin; which promotes endocytosis and proteasomal degradation.</text>
</comment>
<comment type="similarity">
    <text evidence="5">Belongs to the chloride channel (TC 2.A.49) family. ClC-5/CLCN5 subfamily.</text>
</comment>
<name>CLCN5_CAVPO</name>
<keyword id="KW-0050">Antiport</keyword>
<keyword id="KW-0067">ATP-binding</keyword>
<keyword id="KW-0129">CBS domain</keyword>
<keyword id="KW-1003">Cell membrane</keyword>
<keyword id="KW-0868">Chloride</keyword>
<keyword id="KW-0967">Endosome</keyword>
<keyword id="KW-0333">Golgi apparatus</keyword>
<keyword id="KW-0406">Ion transport</keyword>
<keyword id="KW-0472">Membrane</keyword>
<keyword id="KW-0547">Nucleotide-binding</keyword>
<keyword id="KW-1185">Reference proteome</keyword>
<keyword id="KW-0677">Repeat</keyword>
<keyword id="KW-0812">Transmembrane</keyword>
<keyword id="KW-1133">Transmembrane helix</keyword>
<keyword id="KW-0813">Transport</keyword>
<keyword id="KW-0832">Ubl conjugation</keyword>